<name>Y3944_LYSSC</name>
<protein>
    <recommendedName>
        <fullName evidence="1">UPF0735 ACT domain-containing protein Bsph_3944</fullName>
    </recommendedName>
</protein>
<proteinExistence type="inferred from homology"/>
<sequence>MSFRGKRMKNVANQRYYLVREDVLTDAMQKTLEAKHLLSSGSVSSIWDAVKQVDLSRSAFYKYRDAVFPFHSIVQERILTVFLQLQDRKGTLAKLLETVTITHCNVLTIHQTIPIQGRANVTLSLDVTSMTCDLDDLIQQLKRLDFVESAEVISSGAL</sequence>
<comment type="similarity">
    <text evidence="1">Belongs to the UPF0735 family.</text>
</comment>
<evidence type="ECO:0000255" key="1">
    <source>
        <dbReference type="HAMAP-Rule" id="MF_00707"/>
    </source>
</evidence>
<accession>B1HVB0</accession>
<feature type="chain" id="PRO_0000366319" description="UPF0735 ACT domain-containing protein Bsph_3944">
    <location>
        <begin position="1"/>
        <end position="158"/>
    </location>
</feature>
<feature type="domain" description="ACT" evidence="1">
    <location>
        <begin position="80"/>
        <end position="155"/>
    </location>
</feature>
<gene>
    <name type="ordered locus">Bsph_3944</name>
</gene>
<organism>
    <name type="scientific">Lysinibacillus sphaericus (strain C3-41)</name>
    <dbReference type="NCBI Taxonomy" id="444177"/>
    <lineage>
        <taxon>Bacteria</taxon>
        <taxon>Bacillati</taxon>
        <taxon>Bacillota</taxon>
        <taxon>Bacilli</taxon>
        <taxon>Bacillales</taxon>
        <taxon>Bacillaceae</taxon>
        <taxon>Lysinibacillus</taxon>
    </lineage>
</organism>
<dbReference type="EMBL" id="CP000817">
    <property type="protein sequence ID" value="ACA41412.1"/>
    <property type="molecule type" value="Genomic_DNA"/>
</dbReference>
<dbReference type="EnsemblBacteria" id="ACA41412">
    <property type="protein sequence ID" value="ACA41412"/>
    <property type="gene ID" value="Bsph_3944"/>
</dbReference>
<dbReference type="KEGG" id="lsp:Bsph_3944"/>
<dbReference type="HOGENOM" id="CLU_128147_0_0_9"/>
<dbReference type="Proteomes" id="UP000002164">
    <property type="component" value="Chromosome"/>
</dbReference>
<dbReference type="CDD" id="cd04888">
    <property type="entry name" value="ACT_PheB-BS"/>
    <property type="match status" value="1"/>
</dbReference>
<dbReference type="Gene3D" id="3.30.70.260">
    <property type="match status" value="1"/>
</dbReference>
<dbReference type="HAMAP" id="MF_00707">
    <property type="entry name" value="UPF0735"/>
    <property type="match status" value="1"/>
</dbReference>
<dbReference type="InterPro" id="IPR045865">
    <property type="entry name" value="ACT-like_dom_sf"/>
</dbReference>
<dbReference type="InterPro" id="IPR002912">
    <property type="entry name" value="ACT_dom"/>
</dbReference>
<dbReference type="InterPro" id="IPR008310">
    <property type="entry name" value="UPF0735_ACT_dom-cont"/>
</dbReference>
<dbReference type="NCBIfam" id="NF003361">
    <property type="entry name" value="PRK04435.1"/>
    <property type="match status" value="1"/>
</dbReference>
<dbReference type="PIRSF" id="PIRSF025624">
    <property type="entry name" value="ACT_PheB"/>
    <property type="match status" value="1"/>
</dbReference>
<dbReference type="SUPFAM" id="SSF55021">
    <property type="entry name" value="ACT-like"/>
    <property type="match status" value="1"/>
</dbReference>
<dbReference type="PROSITE" id="PS51671">
    <property type="entry name" value="ACT"/>
    <property type="match status" value="1"/>
</dbReference>
<reference key="1">
    <citation type="journal article" date="2008" name="J. Bacteriol.">
        <title>Complete genome sequence of the mosquitocidal bacterium Bacillus sphaericus C3-41 and comparison with those of closely related Bacillus species.</title>
        <authorList>
            <person name="Hu X."/>
            <person name="Fan W."/>
            <person name="Han B."/>
            <person name="Liu H."/>
            <person name="Zheng D."/>
            <person name="Li Q."/>
            <person name="Dong W."/>
            <person name="Yan J."/>
            <person name="Gao M."/>
            <person name="Berry C."/>
            <person name="Yuan Z."/>
        </authorList>
    </citation>
    <scope>NUCLEOTIDE SEQUENCE [LARGE SCALE GENOMIC DNA]</scope>
    <source>
        <strain>C3-41</strain>
    </source>
</reference>